<reference key="1">
    <citation type="journal article" date="2003" name="Nature">
        <title>Genome divergence in two Prochlorococcus ecotypes reflects oceanic niche differentiation.</title>
        <authorList>
            <person name="Rocap G."/>
            <person name="Larimer F.W."/>
            <person name="Lamerdin J.E."/>
            <person name="Malfatti S."/>
            <person name="Chain P."/>
            <person name="Ahlgren N.A."/>
            <person name="Arellano A."/>
            <person name="Coleman M."/>
            <person name="Hauser L."/>
            <person name="Hess W.R."/>
            <person name="Johnson Z.I."/>
            <person name="Land M.L."/>
            <person name="Lindell D."/>
            <person name="Post A.F."/>
            <person name="Regala W."/>
            <person name="Shah M."/>
            <person name="Shaw S.L."/>
            <person name="Steglich C."/>
            <person name="Sullivan M.B."/>
            <person name="Ting C.S."/>
            <person name="Tolonen A."/>
            <person name="Webb E.A."/>
            <person name="Zinser E.R."/>
            <person name="Chisholm S.W."/>
        </authorList>
    </citation>
    <scope>NUCLEOTIDE SEQUENCE [LARGE SCALE GENOMIC DNA]</scope>
    <source>
        <strain>MIT 9313</strain>
    </source>
</reference>
<sequence length="415" mass="45092">MPETPITMPAWLQRGMVDLFPSGQWGDADQQLATRLDEAREQNRPLRVKLGIDPTGRDIHLGHSILFRKLRAFQDAGHTAVLIIGDFTARIGDPTGKSSTRVQLTSEQIEANATTYLAQLGQGQSAEKALLDFTTPGRLEVRRNTEWLADLDLPEVIGLLGTATVGQMLAKEDFGNRYGSGVPIALHEFLYPLLQGYDSVAVQADVELGGTDQKFNVAMGRDLQRHFDQRPQFGLLLPILAGLDGVQKMSKSLSNTVGLNEDPLSMYSKLEKVPDALVSSYVVLLTDLDPEALPVNPRERQKAMAIAVTASRHGIAAAEAAQNDAARLVSGSQDDAASVPEAFLSDVNFPAKAFYLLSAIGLCASSSEARRQIKGGAVRLDGEKITDPNLEFTDSSLLMGKVLQVGKKTFRRLTR</sequence>
<gene>
    <name evidence="1" type="primary">tyrS</name>
    <name type="ordered locus">PMT_1403</name>
</gene>
<accession>Q7TUT0</accession>
<organism>
    <name type="scientific">Prochlorococcus marinus (strain MIT 9313)</name>
    <dbReference type="NCBI Taxonomy" id="74547"/>
    <lineage>
        <taxon>Bacteria</taxon>
        <taxon>Bacillati</taxon>
        <taxon>Cyanobacteriota</taxon>
        <taxon>Cyanophyceae</taxon>
        <taxon>Synechococcales</taxon>
        <taxon>Prochlorococcaceae</taxon>
        <taxon>Prochlorococcus</taxon>
    </lineage>
</organism>
<evidence type="ECO:0000255" key="1">
    <source>
        <dbReference type="HAMAP-Rule" id="MF_02007"/>
    </source>
</evidence>
<evidence type="ECO:0000305" key="2"/>
<keyword id="KW-0030">Aminoacyl-tRNA synthetase</keyword>
<keyword id="KW-0067">ATP-binding</keyword>
<keyword id="KW-0963">Cytoplasm</keyword>
<keyword id="KW-0436">Ligase</keyword>
<keyword id="KW-0547">Nucleotide-binding</keyword>
<keyword id="KW-0648">Protein biosynthesis</keyword>
<keyword id="KW-1185">Reference proteome</keyword>
<keyword id="KW-0694">RNA-binding</keyword>
<name>SYY_PROMM</name>
<proteinExistence type="inferred from homology"/>
<feature type="chain" id="PRO_0000236746" description="Tyrosine--tRNA ligase">
    <location>
        <begin position="1"/>
        <end position="415"/>
    </location>
</feature>
<feature type="domain" description="S4 RNA-binding" evidence="1">
    <location>
        <begin position="351"/>
        <end position="415"/>
    </location>
</feature>
<feature type="short sequence motif" description="'HIGH' region">
    <location>
        <begin position="54"/>
        <end position="63"/>
    </location>
</feature>
<feature type="short sequence motif" description="'KMSKS' region">
    <location>
        <begin position="248"/>
        <end position="252"/>
    </location>
</feature>
<feature type="binding site" evidence="1">
    <location>
        <position position="251"/>
    </location>
    <ligand>
        <name>ATP</name>
        <dbReference type="ChEBI" id="CHEBI:30616"/>
    </ligand>
</feature>
<dbReference type="EC" id="6.1.1.1" evidence="1"/>
<dbReference type="EMBL" id="BX548175">
    <property type="protein sequence ID" value="CAE21578.1"/>
    <property type="status" value="ALT_INIT"/>
    <property type="molecule type" value="Genomic_DNA"/>
</dbReference>
<dbReference type="RefSeq" id="WP_041384542.1">
    <property type="nucleotide sequence ID" value="NC_005071.1"/>
</dbReference>
<dbReference type="SMR" id="Q7TUT0"/>
<dbReference type="KEGG" id="pmt:PMT_1403"/>
<dbReference type="eggNOG" id="COG0162">
    <property type="taxonomic scope" value="Bacteria"/>
</dbReference>
<dbReference type="HOGENOM" id="CLU_024003_5_0_3"/>
<dbReference type="OrthoDB" id="9804243at2"/>
<dbReference type="Proteomes" id="UP000001423">
    <property type="component" value="Chromosome"/>
</dbReference>
<dbReference type="GO" id="GO:0005829">
    <property type="term" value="C:cytosol"/>
    <property type="evidence" value="ECO:0007669"/>
    <property type="project" value="TreeGrafter"/>
</dbReference>
<dbReference type="GO" id="GO:0005524">
    <property type="term" value="F:ATP binding"/>
    <property type="evidence" value="ECO:0007669"/>
    <property type="project" value="UniProtKB-UniRule"/>
</dbReference>
<dbReference type="GO" id="GO:0003723">
    <property type="term" value="F:RNA binding"/>
    <property type="evidence" value="ECO:0007669"/>
    <property type="project" value="UniProtKB-KW"/>
</dbReference>
<dbReference type="GO" id="GO:0004831">
    <property type="term" value="F:tyrosine-tRNA ligase activity"/>
    <property type="evidence" value="ECO:0007669"/>
    <property type="project" value="UniProtKB-UniRule"/>
</dbReference>
<dbReference type="GO" id="GO:0006437">
    <property type="term" value="P:tyrosyl-tRNA aminoacylation"/>
    <property type="evidence" value="ECO:0007669"/>
    <property type="project" value="UniProtKB-UniRule"/>
</dbReference>
<dbReference type="CDD" id="cd00165">
    <property type="entry name" value="S4"/>
    <property type="match status" value="1"/>
</dbReference>
<dbReference type="CDD" id="cd00805">
    <property type="entry name" value="TyrRS_core"/>
    <property type="match status" value="1"/>
</dbReference>
<dbReference type="FunFam" id="3.10.290.10:FF:000022">
    <property type="entry name" value="Tyrosine--tRNA ligase"/>
    <property type="match status" value="1"/>
</dbReference>
<dbReference type="Gene3D" id="3.40.50.620">
    <property type="entry name" value="HUPs"/>
    <property type="match status" value="1"/>
</dbReference>
<dbReference type="Gene3D" id="3.10.290.10">
    <property type="entry name" value="RNA-binding S4 domain"/>
    <property type="match status" value="1"/>
</dbReference>
<dbReference type="Gene3D" id="1.10.240.10">
    <property type="entry name" value="Tyrosyl-Transfer RNA Synthetase"/>
    <property type="match status" value="1"/>
</dbReference>
<dbReference type="HAMAP" id="MF_02007">
    <property type="entry name" value="Tyr_tRNA_synth_type2"/>
    <property type="match status" value="1"/>
</dbReference>
<dbReference type="InterPro" id="IPR002305">
    <property type="entry name" value="aa-tRNA-synth_Ic"/>
</dbReference>
<dbReference type="InterPro" id="IPR014729">
    <property type="entry name" value="Rossmann-like_a/b/a_fold"/>
</dbReference>
<dbReference type="InterPro" id="IPR002942">
    <property type="entry name" value="S4_RNA-bd"/>
</dbReference>
<dbReference type="InterPro" id="IPR036986">
    <property type="entry name" value="S4_RNA-bd_sf"/>
</dbReference>
<dbReference type="InterPro" id="IPR002307">
    <property type="entry name" value="Tyr-tRNA-ligase"/>
</dbReference>
<dbReference type="InterPro" id="IPR024088">
    <property type="entry name" value="Tyr-tRNA-ligase_bac-type"/>
</dbReference>
<dbReference type="InterPro" id="IPR024108">
    <property type="entry name" value="Tyr-tRNA-ligase_bac_2"/>
</dbReference>
<dbReference type="NCBIfam" id="TIGR00234">
    <property type="entry name" value="tyrS"/>
    <property type="match status" value="1"/>
</dbReference>
<dbReference type="PANTHER" id="PTHR11766:SF1">
    <property type="entry name" value="TYROSINE--TRNA LIGASE"/>
    <property type="match status" value="1"/>
</dbReference>
<dbReference type="PANTHER" id="PTHR11766">
    <property type="entry name" value="TYROSYL-TRNA SYNTHETASE"/>
    <property type="match status" value="1"/>
</dbReference>
<dbReference type="Pfam" id="PF01479">
    <property type="entry name" value="S4"/>
    <property type="match status" value="1"/>
</dbReference>
<dbReference type="Pfam" id="PF00579">
    <property type="entry name" value="tRNA-synt_1b"/>
    <property type="match status" value="1"/>
</dbReference>
<dbReference type="PRINTS" id="PR01040">
    <property type="entry name" value="TRNASYNTHTYR"/>
</dbReference>
<dbReference type="SUPFAM" id="SSF55174">
    <property type="entry name" value="Alpha-L RNA-binding motif"/>
    <property type="match status" value="1"/>
</dbReference>
<dbReference type="SUPFAM" id="SSF52374">
    <property type="entry name" value="Nucleotidylyl transferase"/>
    <property type="match status" value="1"/>
</dbReference>
<dbReference type="PROSITE" id="PS50889">
    <property type="entry name" value="S4"/>
    <property type="match status" value="1"/>
</dbReference>
<protein>
    <recommendedName>
        <fullName evidence="1">Tyrosine--tRNA ligase</fullName>
        <ecNumber evidence="1">6.1.1.1</ecNumber>
    </recommendedName>
    <alternativeName>
        <fullName evidence="1">Tyrosyl-tRNA synthetase</fullName>
        <shortName evidence="1">TyrRS</shortName>
    </alternativeName>
</protein>
<comment type="function">
    <text evidence="1">Catalyzes the attachment of tyrosine to tRNA(Tyr) in a two-step reaction: tyrosine is first activated by ATP to form Tyr-AMP and then transferred to the acceptor end of tRNA(Tyr).</text>
</comment>
<comment type="catalytic activity">
    <reaction evidence="1">
        <text>tRNA(Tyr) + L-tyrosine + ATP = L-tyrosyl-tRNA(Tyr) + AMP + diphosphate + H(+)</text>
        <dbReference type="Rhea" id="RHEA:10220"/>
        <dbReference type="Rhea" id="RHEA-COMP:9706"/>
        <dbReference type="Rhea" id="RHEA-COMP:9707"/>
        <dbReference type="ChEBI" id="CHEBI:15378"/>
        <dbReference type="ChEBI" id="CHEBI:30616"/>
        <dbReference type="ChEBI" id="CHEBI:33019"/>
        <dbReference type="ChEBI" id="CHEBI:58315"/>
        <dbReference type="ChEBI" id="CHEBI:78442"/>
        <dbReference type="ChEBI" id="CHEBI:78536"/>
        <dbReference type="ChEBI" id="CHEBI:456215"/>
        <dbReference type="EC" id="6.1.1.1"/>
    </reaction>
</comment>
<comment type="subunit">
    <text evidence="1">Homodimer.</text>
</comment>
<comment type="subcellular location">
    <subcellularLocation>
        <location evidence="1">Cytoplasm</location>
    </subcellularLocation>
</comment>
<comment type="similarity">
    <text evidence="1">Belongs to the class-I aminoacyl-tRNA synthetase family. TyrS type 2 subfamily.</text>
</comment>
<comment type="sequence caution" evidence="2">
    <conflict type="erroneous initiation">
        <sequence resource="EMBL-CDS" id="CAE21578"/>
    </conflict>
</comment>